<keyword id="KW-0020">Allergen</keyword>
<keyword id="KW-0568">Pathogenesis-related protein</keyword>
<keyword id="KW-0611">Plant defense</keyword>
<dbReference type="EMBL" id="AF036931">
    <property type="protein sequence ID" value="AAB92255.1"/>
    <property type="molecule type" value="mRNA"/>
</dbReference>
<dbReference type="SMR" id="O49065"/>
<dbReference type="GO" id="GO:0005737">
    <property type="term" value="C:cytoplasm"/>
    <property type="evidence" value="ECO:0007669"/>
    <property type="project" value="TreeGrafter"/>
</dbReference>
<dbReference type="GO" id="GO:0005634">
    <property type="term" value="C:nucleus"/>
    <property type="evidence" value="ECO:0007669"/>
    <property type="project" value="TreeGrafter"/>
</dbReference>
<dbReference type="GO" id="GO:0010427">
    <property type="term" value="F:abscisic acid binding"/>
    <property type="evidence" value="ECO:0007669"/>
    <property type="project" value="InterPro"/>
</dbReference>
<dbReference type="GO" id="GO:0004864">
    <property type="term" value="F:protein phosphatase inhibitor activity"/>
    <property type="evidence" value="ECO:0007669"/>
    <property type="project" value="InterPro"/>
</dbReference>
<dbReference type="GO" id="GO:0038023">
    <property type="term" value="F:signaling receptor activity"/>
    <property type="evidence" value="ECO:0007669"/>
    <property type="project" value="InterPro"/>
</dbReference>
<dbReference type="GO" id="GO:0009738">
    <property type="term" value="P:abscisic acid-activated signaling pathway"/>
    <property type="evidence" value="ECO:0007669"/>
    <property type="project" value="InterPro"/>
</dbReference>
<dbReference type="GO" id="GO:0006952">
    <property type="term" value="P:defense response"/>
    <property type="evidence" value="ECO:0007669"/>
    <property type="project" value="UniProtKB-KW"/>
</dbReference>
<dbReference type="CDD" id="cd07816">
    <property type="entry name" value="Bet_v1-like"/>
    <property type="match status" value="1"/>
</dbReference>
<dbReference type="FunFam" id="3.30.530.20:FF:000007">
    <property type="entry name" value="Major pollen allergen Bet v 1-A"/>
    <property type="match status" value="1"/>
</dbReference>
<dbReference type="Gene3D" id="3.30.530.20">
    <property type="match status" value="1"/>
</dbReference>
<dbReference type="InterPro" id="IPR000916">
    <property type="entry name" value="Bet_v_I/MLP"/>
</dbReference>
<dbReference type="InterPro" id="IPR024949">
    <property type="entry name" value="Bet_v_I_allergen"/>
</dbReference>
<dbReference type="InterPro" id="IPR050279">
    <property type="entry name" value="Plant_def-hormone_signal"/>
</dbReference>
<dbReference type="InterPro" id="IPR023393">
    <property type="entry name" value="START-like_dom_sf"/>
</dbReference>
<dbReference type="PANTHER" id="PTHR31213">
    <property type="entry name" value="OS08G0374000 PROTEIN-RELATED"/>
    <property type="match status" value="1"/>
</dbReference>
<dbReference type="PANTHER" id="PTHR31213:SF55">
    <property type="entry name" value="STRESS-INDUCED PROTEIN SAM22"/>
    <property type="match status" value="1"/>
</dbReference>
<dbReference type="Pfam" id="PF00407">
    <property type="entry name" value="Bet_v_1"/>
    <property type="match status" value="1"/>
</dbReference>
<dbReference type="PRINTS" id="PR00634">
    <property type="entry name" value="BETALLERGEN"/>
</dbReference>
<dbReference type="SMART" id="SM01037">
    <property type="entry name" value="Bet_v_1"/>
    <property type="match status" value="1"/>
</dbReference>
<dbReference type="SUPFAM" id="SSF55961">
    <property type="entry name" value="Bet v1-like"/>
    <property type="match status" value="1"/>
</dbReference>
<dbReference type="PROSITE" id="PS00451">
    <property type="entry name" value="PATHOGENESIS_BETVI"/>
    <property type="match status" value="1"/>
</dbReference>
<accession>O49065</accession>
<sequence length="157" mass="17040">MAVAEFEITSSLSPSNIFKAFVIDFDTIAPKAEPETYKSIKTIEGDGGVGTIKSITYSDGVPFTSSKHKVDAIDSNNFSISYTIFEGDVLMGIIESGTHHLKFLPSADGGSVYKHSMVFKCKGDAKLTDENVSLMKEGLKKTFKAIETYVISHPEAC</sequence>
<protein>
    <recommendedName>
        <fullName>Root allergen protein</fullName>
        <shortName>RAP</shortName>
    </recommendedName>
</protein>
<feature type="chain" id="PRO_0000154204" description="Root allergen protein">
    <location>
        <begin position="1"/>
        <end position="157"/>
    </location>
</feature>
<name>RAP_TAROF</name>
<reference key="1">
    <citation type="submission" date="1997-12" db="EMBL/GenBank/DDBJ databases">
        <authorList>
            <person name="Xu X.-Y."/>
            <person name="Bewley J.D."/>
            <person name="Greenwood J.S."/>
        </authorList>
    </citation>
    <scope>NUCLEOTIDE SEQUENCE [MRNA]</scope>
    <source>
        <tissue>Root</tissue>
    </source>
</reference>
<organism>
    <name type="scientific">Taraxacum officinale</name>
    <name type="common">Common dandelion</name>
    <name type="synonym">Leontodon taraxacum</name>
    <dbReference type="NCBI Taxonomy" id="50225"/>
    <lineage>
        <taxon>Eukaryota</taxon>
        <taxon>Viridiplantae</taxon>
        <taxon>Streptophyta</taxon>
        <taxon>Embryophyta</taxon>
        <taxon>Tracheophyta</taxon>
        <taxon>Spermatophyta</taxon>
        <taxon>Magnoliopsida</taxon>
        <taxon>eudicotyledons</taxon>
        <taxon>Gunneridae</taxon>
        <taxon>Pentapetalae</taxon>
        <taxon>asterids</taxon>
        <taxon>campanulids</taxon>
        <taxon>Asterales</taxon>
        <taxon>Asteraceae</taxon>
        <taxon>Cichorioideae</taxon>
        <taxon>Cichorieae</taxon>
        <taxon>Crepidinae</taxon>
        <taxon>Taraxacum</taxon>
    </lineage>
</organism>
<evidence type="ECO:0000305" key="1"/>
<proteinExistence type="evidence at protein level"/>
<comment type="allergen">
    <text>Causes an allergic reaction in human.</text>
</comment>
<comment type="similarity">
    <text evidence="1">Belongs to the BetVI family.</text>
</comment>